<protein>
    <recommendedName>
        <fullName>Polyubiquitin 11</fullName>
    </recommendedName>
    <component>
        <recommendedName>
            <fullName>Ubiquitin</fullName>
        </recommendedName>
    </component>
</protein>
<organism>
    <name type="scientific">Arabidopsis thaliana</name>
    <name type="common">Mouse-ear cress</name>
    <dbReference type="NCBI Taxonomy" id="3702"/>
    <lineage>
        <taxon>Eukaryota</taxon>
        <taxon>Viridiplantae</taxon>
        <taxon>Streptophyta</taxon>
        <taxon>Embryophyta</taxon>
        <taxon>Tracheophyta</taxon>
        <taxon>Spermatophyta</taxon>
        <taxon>Magnoliopsida</taxon>
        <taxon>eudicotyledons</taxon>
        <taxon>Gunneridae</taxon>
        <taxon>Pentapetalae</taxon>
        <taxon>rosids</taxon>
        <taxon>malvids</taxon>
        <taxon>Brassicales</taxon>
        <taxon>Brassicaceae</taxon>
        <taxon>Camelineae</taxon>
        <taxon>Arabidopsis</taxon>
    </lineage>
</organism>
<reference key="1">
    <citation type="journal article" date="1995" name="Genetics">
        <title>Structure and evolution of genes encoding polyubiquitin and ubiquitin-like proteins in Arabidopsis thaliana ecotype Columbia.</title>
        <authorList>
            <person name="Callis J."/>
            <person name="Carpenter T."/>
            <person name="Sun C.W."/>
            <person name="Vierstra R.D."/>
        </authorList>
    </citation>
    <scope>NUCLEOTIDE SEQUENCE [GENOMIC DNA]</scope>
    <source>
        <strain>cv. Columbia</strain>
    </source>
</reference>
<reference key="2">
    <citation type="journal article" date="1999" name="Nature">
        <title>Sequence and analysis of chromosome 4 of the plant Arabidopsis thaliana.</title>
        <authorList>
            <person name="Mayer K.F.X."/>
            <person name="Schueller C."/>
            <person name="Wambutt R."/>
            <person name="Murphy G."/>
            <person name="Volckaert G."/>
            <person name="Pohl T."/>
            <person name="Duesterhoeft A."/>
            <person name="Stiekema W."/>
            <person name="Entian K.-D."/>
            <person name="Terryn N."/>
            <person name="Harris B."/>
            <person name="Ansorge W."/>
            <person name="Brandt P."/>
            <person name="Grivell L.A."/>
            <person name="Rieger M."/>
            <person name="Weichselgartner M."/>
            <person name="de Simone V."/>
            <person name="Obermaier B."/>
            <person name="Mache R."/>
            <person name="Mueller M."/>
            <person name="Kreis M."/>
            <person name="Delseny M."/>
            <person name="Puigdomenech P."/>
            <person name="Watson M."/>
            <person name="Schmidtheini T."/>
            <person name="Reichert B."/>
            <person name="Portetelle D."/>
            <person name="Perez-Alonso M."/>
            <person name="Boutry M."/>
            <person name="Bancroft I."/>
            <person name="Vos P."/>
            <person name="Hoheisel J."/>
            <person name="Zimmermann W."/>
            <person name="Wedler H."/>
            <person name="Ridley P."/>
            <person name="Langham S.-A."/>
            <person name="McCullagh B."/>
            <person name="Bilham L."/>
            <person name="Robben J."/>
            <person name="van der Schueren J."/>
            <person name="Grymonprez B."/>
            <person name="Chuang Y.-J."/>
            <person name="Vandenbussche F."/>
            <person name="Braeken M."/>
            <person name="Weltjens I."/>
            <person name="Voet M."/>
            <person name="Bastiaens I."/>
            <person name="Aert R."/>
            <person name="Defoor E."/>
            <person name="Weitzenegger T."/>
            <person name="Bothe G."/>
            <person name="Ramsperger U."/>
            <person name="Hilbert H."/>
            <person name="Braun M."/>
            <person name="Holzer E."/>
            <person name="Brandt A."/>
            <person name="Peters S."/>
            <person name="van Staveren M."/>
            <person name="Dirkse W."/>
            <person name="Mooijman P."/>
            <person name="Klein Lankhorst R."/>
            <person name="Rose M."/>
            <person name="Hauf J."/>
            <person name="Koetter P."/>
            <person name="Berneiser S."/>
            <person name="Hempel S."/>
            <person name="Feldpausch M."/>
            <person name="Lamberth S."/>
            <person name="Van den Daele H."/>
            <person name="De Keyser A."/>
            <person name="Buysshaert C."/>
            <person name="Gielen J."/>
            <person name="Villarroel R."/>
            <person name="De Clercq R."/>
            <person name="van Montagu M."/>
            <person name="Rogers J."/>
            <person name="Cronin A."/>
            <person name="Quail M.A."/>
            <person name="Bray-Allen S."/>
            <person name="Clark L."/>
            <person name="Doggett J."/>
            <person name="Hall S."/>
            <person name="Kay M."/>
            <person name="Lennard N."/>
            <person name="McLay K."/>
            <person name="Mayes R."/>
            <person name="Pettett A."/>
            <person name="Rajandream M.A."/>
            <person name="Lyne M."/>
            <person name="Benes V."/>
            <person name="Rechmann S."/>
            <person name="Borkova D."/>
            <person name="Bloecker H."/>
            <person name="Scharfe M."/>
            <person name="Grimm M."/>
            <person name="Loehnert T.-H."/>
            <person name="Dose S."/>
            <person name="de Haan M."/>
            <person name="Maarse A.C."/>
            <person name="Schaefer M."/>
            <person name="Mueller-Auer S."/>
            <person name="Gabel C."/>
            <person name="Fuchs M."/>
            <person name="Fartmann B."/>
            <person name="Granderath K."/>
            <person name="Dauner D."/>
            <person name="Herzl A."/>
            <person name="Neumann S."/>
            <person name="Argiriou A."/>
            <person name="Vitale D."/>
            <person name="Liguori R."/>
            <person name="Piravandi E."/>
            <person name="Massenet O."/>
            <person name="Quigley F."/>
            <person name="Clabauld G."/>
            <person name="Muendlein A."/>
            <person name="Felber R."/>
            <person name="Schnabl S."/>
            <person name="Hiller R."/>
            <person name="Schmidt W."/>
            <person name="Lecharny A."/>
            <person name="Aubourg S."/>
            <person name="Chefdor F."/>
            <person name="Cooke R."/>
            <person name="Berger C."/>
            <person name="Monfort A."/>
            <person name="Casacuberta E."/>
            <person name="Gibbons T."/>
            <person name="Weber N."/>
            <person name="Vandenbol M."/>
            <person name="Bargues M."/>
            <person name="Terol J."/>
            <person name="Torres A."/>
            <person name="Perez-Perez A."/>
            <person name="Purnelle B."/>
            <person name="Bent E."/>
            <person name="Johnson S."/>
            <person name="Tacon D."/>
            <person name="Jesse T."/>
            <person name="Heijnen L."/>
            <person name="Schwarz S."/>
            <person name="Scholler P."/>
            <person name="Heber S."/>
            <person name="Francs P."/>
            <person name="Bielke C."/>
            <person name="Frishman D."/>
            <person name="Haase D."/>
            <person name="Lemcke K."/>
            <person name="Mewes H.-W."/>
            <person name="Stocker S."/>
            <person name="Zaccaria P."/>
            <person name="Bevan M."/>
            <person name="Wilson R.K."/>
            <person name="de la Bastide M."/>
            <person name="Habermann K."/>
            <person name="Parnell L."/>
            <person name="Dedhia N."/>
            <person name="Gnoj L."/>
            <person name="Schutz K."/>
            <person name="Huang E."/>
            <person name="Spiegel L."/>
            <person name="Sekhon M."/>
            <person name="Murray J."/>
            <person name="Sheet P."/>
            <person name="Cordes M."/>
            <person name="Abu-Threideh J."/>
            <person name="Stoneking T."/>
            <person name="Kalicki J."/>
            <person name="Graves T."/>
            <person name="Harmon G."/>
            <person name="Edwards J."/>
            <person name="Latreille P."/>
            <person name="Courtney L."/>
            <person name="Cloud J."/>
            <person name="Abbott A."/>
            <person name="Scott K."/>
            <person name="Johnson D."/>
            <person name="Minx P."/>
            <person name="Bentley D."/>
            <person name="Fulton B."/>
            <person name="Miller N."/>
            <person name="Greco T."/>
            <person name="Kemp K."/>
            <person name="Kramer J."/>
            <person name="Fulton L."/>
            <person name="Mardis E."/>
            <person name="Dante M."/>
            <person name="Pepin K."/>
            <person name="Hillier L.W."/>
            <person name="Nelson J."/>
            <person name="Spieth J."/>
            <person name="Ryan E."/>
            <person name="Andrews S."/>
            <person name="Geisel C."/>
            <person name="Layman D."/>
            <person name="Du H."/>
            <person name="Ali J."/>
            <person name="Berghoff A."/>
            <person name="Jones K."/>
            <person name="Drone K."/>
            <person name="Cotton M."/>
            <person name="Joshu C."/>
            <person name="Antonoiu B."/>
            <person name="Zidanic M."/>
            <person name="Strong C."/>
            <person name="Sun H."/>
            <person name="Lamar B."/>
            <person name="Yordan C."/>
            <person name="Ma P."/>
            <person name="Zhong J."/>
            <person name="Preston R."/>
            <person name="Vil D."/>
            <person name="Shekher M."/>
            <person name="Matero A."/>
            <person name="Shah R."/>
            <person name="Swaby I.K."/>
            <person name="O'Shaughnessy A."/>
            <person name="Rodriguez M."/>
            <person name="Hoffman J."/>
            <person name="Till S."/>
            <person name="Granat S."/>
            <person name="Shohdy N."/>
            <person name="Hasegawa A."/>
            <person name="Hameed A."/>
            <person name="Lodhi M."/>
            <person name="Johnson A."/>
            <person name="Chen E."/>
            <person name="Marra M.A."/>
            <person name="Martienssen R."/>
            <person name="McCombie W.R."/>
        </authorList>
    </citation>
    <scope>NUCLEOTIDE SEQUENCE [LARGE SCALE GENOMIC DNA]</scope>
    <source>
        <strain>cv. Columbia</strain>
    </source>
</reference>
<reference key="3">
    <citation type="journal article" date="2017" name="Plant J.">
        <title>Araport11: a complete reannotation of the Arabidopsis thaliana reference genome.</title>
        <authorList>
            <person name="Cheng C.Y."/>
            <person name="Krishnakumar V."/>
            <person name="Chan A.P."/>
            <person name="Thibaud-Nissen F."/>
            <person name="Schobel S."/>
            <person name="Town C.D."/>
        </authorList>
    </citation>
    <scope>GENOME REANNOTATION</scope>
    <source>
        <strain>cv. Columbia</strain>
    </source>
</reference>
<reference key="4">
    <citation type="journal article" date="2003" name="Science">
        <title>Empirical analysis of transcriptional activity in the Arabidopsis genome.</title>
        <authorList>
            <person name="Yamada K."/>
            <person name="Lim J."/>
            <person name="Dale J.M."/>
            <person name="Chen H."/>
            <person name="Shinn P."/>
            <person name="Palm C.J."/>
            <person name="Southwick A.M."/>
            <person name="Wu H.C."/>
            <person name="Kim C.J."/>
            <person name="Nguyen M."/>
            <person name="Pham P.K."/>
            <person name="Cheuk R.F."/>
            <person name="Karlin-Newmann G."/>
            <person name="Liu S.X."/>
            <person name="Lam B."/>
            <person name="Sakano H."/>
            <person name="Wu T."/>
            <person name="Yu G."/>
            <person name="Miranda M."/>
            <person name="Quach H.L."/>
            <person name="Tripp M."/>
            <person name="Chang C.H."/>
            <person name="Lee J.M."/>
            <person name="Toriumi M.J."/>
            <person name="Chan M.M."/>
            <person name="Tang C.C."/>
            <person name="Onodera C.S."/>
            <person name="Deng J.M."/>
            <person name="Akiyama K."/>
            <person name="Ansari Y."/>
            <person name="Arakawa T."/>
            <person name="Banh J."/>
            <person name="Banno F."/>
            <person name="Bowser L."/>
            <person name="Brooks S.Y."/>
            <person name="Carninci P."/>
            <person name="Chao Q."/>
            <person name="Choy N."/>
            <person name="Enju A."/>
            <person name="Goldsmith A.D."/>
            <person name="Gurjal M."/>
            <person name="Hansen N.F."/>
            <person name="Hayashizaki Y."/>
            <person name="Johnson-Hopson C."/>
            <person name="Hsuan V.W."/>
            <person name="Iida K."/>
            <person name="Karnes M."/>
            <person name="Khan S."/>
            <person name="Koesema E."/>
            <person name="Ishida J."/>
            <person name="Jiang P.X."/>
            <person name="Jones T."/>
            <person name="Kawai J."/>
            <person name="Kamiya A."/>
            <person name="Meyers C."/>
            <person name="Nakajima M."/>
            <person name="Narusaka M."/>
            <person name="Seki M."/>
            <person name="Sakurai T."/>
            <person name="Satou M."/>
            <person name="Tamse R."/>
            <person name="Vaysberg M."/>
            <person name="Wallender E.K."/>
            <person name="Wong C."/>
            <person name="Yamamura Y."/>
            <person name="Yuan S."/>
            <person name="Shinozaki K."/>
            <person name="Davis R.W."/>
            <person name="Theologis A."/>
            <person name="Ecker J.R."/>
        </authorList>
    </citation>
    <scope>NUCLEOTIDE SEQUENCE [LARGE SCALE MRNA]</scope>
    <source>
        <strain>cv. Columbia</strain>
    </source>
</reference>
<accession>P0CH33</accession>
<accession>O80715</accession>
<accession>P59263</accession>
<accession>Q38875</accession>
<accession>Q9LDJ2</accession>
<accession>Q9LYW1</accession>
<accession>Q9M0W3</accession>
<accession>Q9M1P9</accession>
<accession>Q9S7X3</accession>
<name>UBQ11_ARATH</name>
<gene>
    <name type="primary">UBQ11</name>
    <name type="ordered locus">At4g05050</name>
    <name type="ORF">C17L7.6</name>
    <name type="ORF">T32N4.13</name>
</gene>
<proteinExistence type="evidence at transcript level"/>
<feature type="chain" id="PRO_0000396895" description="Ubiquitin">
    <location>
        <begin position="1"/>
        <end position="76"/>
    </location>
</feature>
<feature type="chain" id="PRO_0000396896" description="Ubiquitin">
    <location>
        <begin position="77"/>
        <end position="152"/>
    </location>
</feature>
<feature type="chain" id="PRO_0000396897" description="Ubiquitin">
    <location>
        <begin position="153"/>
        <end position="228"/>
    </location>
</feature>
<feature type="propeptide" id="PRO_0000396898" evidence="3">
    <location>
        <position position="229"/>
    </location>
</feature>
<feature type="domain" description="Ubiquitin-like 1" evidence="2">
    <location>
        <begin position="1"/>
        <end position="76"/>
    </location>
</feature>
<feature type="domain" description="Ubiquitin-like 2" evidence="2">
    <location>
        <begin position="77"/>
        <end position="152"/>
    </location>
</feature>
<feature type="domain" description="Ubiquitin-like 3" evidence="2">
    <location>
        <begin position="153"/>
        <end position="228"/>
    </location>
</feature>
<feature type="cross-link" description="Glycyl lysine isopeptide (Gly-Lys) (interchain with K-? in acceptor proteins)" evidence="2">
    <location>
        <position position="76"/>
    </location>
</feature>
<comment type="function">
    <text evidence="1">Ubiquitin exists either covalently attached to another protein, or free (unanchored). When covalently bound, it is conjugated to target proteins via an isopeptide bond either as a monomer (monoubiquitin), a polymer linked via different Lys residues of the ubiquitin (polyubiquitin chains) or a linear polymer linked via the initiator Met of the ubiquitin (linear polyubiquitin chains). Polyubiquitin chains, when attached to a target protein, have different functions depending on the Lys residue of the ubiquitin that is linked: Lys-11-linked is involved in ERAD (endoplasmic reticulum-associated degradation) and in cell-cycle regulation; Lys-29-linked is involved in lysosomal degradation; Lys-33-linked is involved in kinase modification; Lys-48-linked is involved in protein degradation via the proteasome; Lys-63-linked is involved in endocytosis, and DNA-damage responses. Linear polymer chains formed via attachment by the initiator Met lead to cell signaling. Ubiquitin is usually conjugated to Lys residues of target proteins, however, in rare cases, conjugation to Cys or Ser residues has been observed. When polyubiquitin is free (unanchored-polyubiquitin), it also has distinct roles, such as in activation of protein kinases, and in signaling (By similarity).</text>
</comment>
<comment type="subcellular location">
    <subcellularLocation>
        <location evidence="1">Cytoplasm</location>
    </subcellularLocation>
    <subcellularLocation>
        <location evidence="1">Nucleus</location>
    </subcellularLocation>
</comment>
<comment type="alternative products">
    <event type="alternative splicing"/>
    <isoform>
        <id>P0CH33-1</id>
        <name>1</name>
        <sequence type="displayed"/>
    </isoform>
    <text>A number of isoforms are produced. According to EST sequences.</text>
</comment>
<comment type="miscellaneous">
    <text>Ubiquitin is encoded by 16 different genes. Ubiquitin is generally synthesized as a polyubiquitin precursor with tandem head to tail repeats. Often, there is one to three additional amino acids after the last repeat, removed in the mature protein. Alternatively, ubiquitin extension protein is synthesized as a single copy of ubiquitin fused to a ribosomal protein (either eL40 or eS31) or to a ubiquitin-related protein (either RUB1 or RUB2). Following translation, extension protein is cleaved from ubiquitin.</text>
</comment>
<comment type="miscellaneous">
    <text>For the sake of clarity sequence features are annotated only for the first chain, and are not repeated for each of the following chains.</text>
</comment>
<comment type="similarity">
    <text evidence="3">Belongs to the ubiquitin family.</text>
</comment>
<keyword id="KW-0025">Alternative splicing</keyword>
<keyword id="KW-0963">Cytoplasm</keyword>
<keyword id="KW-1017">Isopeptide bond</keyword>
<keyword id="KW-0539">Nucleus</keyword>
<keyword id="KW-1185">Reference proteome</keyword>
<keyword id="KW-0677">Repeat</keyword>
<keyword id="KW-0833">Ubl conjugation pathway</keyword>
<dbReference type="EMBL" id="AF162444">
    <property type="protein sequence ID" value="AAD48980.1"/>
    <property type="molecule type" value="Genomic_DNA"/>
</dbReference>
<dbReference type="EMBL" id="AL161502">
    <property type="protein sequence ID" value="CAB81047.1"/>
    <property type="molecule type" value="Genomic_DNA"/>
</dbReference>
<dbReference type="EMBL" id="CP002687">
    <property type="protein sequence ID" value="AEE82468.1"/>
    <property type="molecule type" value="Genomic_DNA"/>
</dbReference>
<dbReference type="EMBL" id="CP002687">
    <property type="protein sequence ID" value="AEE82469.1"/>
    <property type="molecule type" value="Genomic_DNA"/>
</dbReference>
<dbReference type="EMBL" id="CP002687">
    <property type="protein sequence ID" value="AEE82470.1"/>
    <property type="molecule type" value="Genomic_DNA"/>
</dbReference>
<dbReference type="EMBL" id="AY052661">
    <property type="protein sequence ID" value="AAK96565.1"/>
    <property type="molecule type" value="mRNA"/>
</dbReference>
<dbReference type="EMBL" id="AY054281">
    <property type="protein sequence ID" value="AAL06940.1"/>
    <property type="molecule type" value="mRNA"/>
</dbReference>
<dbReference type="EMBL" id="AY057530">
    <property type="protein sequence ID" value="AAL09770.1"/>
    <property type="molecule type" value="mRNA"/>
</dbReference>
<dbReference type="EMBL" id="AY098958">
    <property type="protein sequence ID" value="AAM19968.1"/>
    <property type="molecule type" value="mRNA"/>
</dbReference>
<dbReference type="RefSeq" id="NP_001031585.1">
    <molecule id="P0CH33-1"/>
    <property type="nucleotide sequence ID" value="NM_001036508.2"/>
</dbReference>
<dbReference type="RefSeq" id="NP_001118936.1">
    <molecule id="P0CH33-1"/>
    <property type="nucleotide sequence ID" value="NM_001125464.2"/>
</dbReference>
<dbReference type="RefSeq" id="NP_567247.2">
    <molecule id="P0CH33-1"/>
    <property type="nucleotide sequence ID" value="NM_116523.3"/>
</dbReference>
<dbReference type="RefSeq" id="NP_567286.1">
    <molecule id="P0CH33-1"/>
    <property type="nucleotide sequence ID" value="NM_116744.4"/>
</dbReference>
<dbReference type="RefSeq" id="NP_849291.1">
    <molecule id="P0CH33-1"/>
    <property type="nucleotide sequence ID" value="NM_178960.2"/>
</dbReference>
<dbReference type="SMR" id="P0CH33"/>
<dbReference type="BioGRID" id="11158">
    <property type="interactions" value="1"/>
</dbReference>
<dbReference type="BioGRID" id="13437">
    <property type="interactions" value="3"/>
</dbReference>
<dbReference type="FunCoup" id="P0CH33">
    <property type="interactions" value="704"/>
</dbReference>
<dbReference type="STRING" id="3702.P0CH33"/>
<dbReference type="ProMEX" id="P0CH33"/>
<dbReference type="EnsemblPlants" id="AT4G02890.1">
    <property type="protein sequence ID" value="AT4G02890.1"/>
    <property type="gene ID" value="AT4G02890"/>
</dbReference>
<dbReference type="EnsemblPlants" id="AT4G02890.2">
    <property type="protein sequence ID" value="AT4G02890.2"/>
    <property type="gene ID" value="AT4G02890"/>
</dbReference>
<dbReference type="EnsemblPlants" id="AT4G05050.1">
    <property type="protein sequence ID" value="AT4G05050.1"/>
    <property type="gene ID" value="AT4G05050"/>
</dbReference>
<dbReference type="EnsemblPlants" id="AT4G05050.2">
    <property type="protein sequence ID" value="AT4G05050.2"/>
    <property type="gene ID" value="AT4G05050"/>
</dbReference>
<dbReference type="EnsemblPlants" id="AT4G05050.3">
    <property type="protein sequence ID" value="AT4G05050.3"/>
    <property type="gene ID" value="AT4G05050"/>
</dbReference>
<dbReference type="GeneID" id="825847"/>
<dbReference type="Gramene" id="AT4G02890.1">
    <property type="protein sequence ID" value="AT4G02890.1"/>
    <property type="gene ID" value="AT4G02890"/>
</dbReference>
<dbReference type="Gramene" id="AT4G02890.2">
    <property type="protein sequence ID" value="AT4G02890.2"/>
    <property type="gene ID" value="AT4G02890"/>
</dbReference>
<dbReference type="Gramene" id="AT4G05050.1">
    <property type="protein sequence ID" value="AT4G05050.1"/>
    <property type="gene ID" value="AT4G05050"/>
</dbReference>
<dbReference type="Gramene" id="AT4G05050.2">
    <property type="protein sequence ID" value="AT4G05050.2"/>
    <property type="gene ID" value="AT4G05050"/>
</dbReference>
<dbReference type="Gramene" id="AT4G05050.3">
    <property type="protein sequence ID" value="AT4G05050.3"/>
    <property type="gene ID" value="AT4G05050"/>
</dbReference>
<dbReference type="KEGG" id="ath:AT4G05050"/>
<dbReference type="Araport" id="AT4G05050"/>
<dbReference type="TAIR" id="AT4G05050">
    <property type="gene designation" value="UBQ11"/>
</dbReference>
<dbReference type="eggNOG" id="KOG0001">
    <property type="taxonomic scope" value="Eukaryota"/>
</dbReference>
<dbReference type="HOGENOM" id="CLU_010412_0_0_1"/>
<dbReference type="InParanoid" id="P0CH33"/>
<dbReference type="OrthoDB" id="1494560at2759"/>
<dbReference type="PRO" id="PR:P0CH33"/>
<dbReference type="Proteomes" id="UP000006548">
    <property type="component" value="Chromosome 4"/>
</dbReference>
<dbReference type="ExpressionAtlas" id="P0CH33">
    <property type="expression patterns" value="baseline and differential"/>
</dbReference>
<dbReference type="GO" id="GO:0005829">
    <property type="term" value="C:cytosol"/>
    <property type="evidence" value="ECO:0007005"/>
    <property type="project" value="TAIR"/>
</dbReference>
<dbReference type="GO" id="GO:0005634">
    <property type="term" value="C:nucleus"/>
    <property type="evidence" value="ECO:0007669"/>
    <property type="project" value="UniProtKB-SubCell"/>
</dbReference>
<dbReference type="GO" id="GO:0003729">
    <property type="term" value="F:mRNA binding"/>
    <property type="evidence" value="ECO:0000314"/>
    <property type="project" value="TAIR"/>
</dbReference>
<dbReference type="GO" id="GO:0006511">
    <property type="term" value="P:ubiquitin-dependent protein catabolic process"/>
    <property type="evidence" value="ECO:0000250"/>
    <property type="project" value="TAIR"/>
</dbReference>
<dbReference type="CDD" id="cd01803">
    <property type="entry name" value="Ubl_ubiquitin"/>
    <property type="match status" value="3"/>
</dbReference>
<dbReference type="FunFam" id="3.10.20.90:FF:000016">
    <property type="entry name" value="Polyubiquitin 3"/>
    <property type="match status" value="3"/>
</dbReference>
<dbReference type="Gene3D" id="3.10.20.90">
    <property type="entry name" value="Phosphatidylinositol 3-kinase Catalytic Subunit, Chain A, domain 1"/>
    <property type="match status" value="3"/>
</dbReference>
<dbReference type="InterPro" id="IPR000626">
    <property type="entry name" value="Ubiquitin-like_dom"/>
</dbReference>
<dbReference type="InterPro" id="IPR029071">
    <property type="entry name" value="Ubiquitin-like_domsf"/>
</dbReference>
<dbReference type="InterPro" id="IPR019954">
    <property type="entry name" value="Ubiquitin_CS"/>
</dbReference>
<dbReference type="InterPro" id="IPR019956">
    <property type="entry name" value="Ubiquitin_dom"/>
</dbReference>
<dbReference type="InterPro" id="IPR050158">
    <property type="entry name" value="Ubiquitin_ubiquitin-like"/>
</dbReference>
<dbReference type="PANTHER" id="PTHR10666">
    <property type="entry name" value="UBIQUITIN"/>
    <property type="match status" value="1"/>
</dbReference>
<dbReference type="Pfam" id="PF00240">
    <property type="entry name" value="ubiquitin"/>
    <property type="match status" value="3"/>
</dbReference>
<dbReference type="PRINTS" id="PR00348">
    <property type="entry name" value="UBIQUITIN"/>
</dbReference>
<dbReference type="SMART" id="SM00213">
    <property type="entry name" value="UBQ"/>
    <property type="match status" value="3"/>
</dbReference>
<dbReference type="SUPFAM" id="SSF54236">
    <property type="entry name" value="Ubiquitin-like"/>
    <property type="match status" value="3"/>
</dbReference>
<dbReference type="PROSITE" id="PS00299">
    <property type="entry name" value="UBIQUITIN_1"/>
    <property type="match status" value="3"/>
</dbReference>
<dbReference type="PROSITE" id="PS50053">
    <property type="entry name" value="UBIQUITIN_2"/>
    <property type="match status" value="3"/>
</dbReference>
<sequence length="229" mass="25685">MQIFVKTLTGKTITLEVESSDTIDNVKAKIQDKEGIPPDQQRLIFAGKQLEDGRTLADYNIQKESTLHLVLRLRGGMQIFVKTLTGKTITLEVESSDTIDNVKAKIQDKEGIPPDQQRLIFAGKQLEDGRTLADYNIQKESTLHLVLRLRGGMQIFVKTLTGKTITLEVESSDTIDNVKAKIQDKEGIPPDQQRLIFAGKQLEDGRTLADYNIQKESTLHLVLRLRGGF</sequence>
<evidence type="ECO:0000250" key="1"/>
<evidence type="ECO:0000255" key="2">
    <source>
        <dbReference type="PROSITE-ProRule" id="PRU00214"/>
    </source>
</evidence>
<evidence type="ECO:0000305" key="3"/>